<sequence length="473" mass="55511">MAACVGSRTLSKDDVNYRLHFRMINEQQVEDITLEFFYRPHTITLLSFTILSLMAFAFTRDDSVPEENIWRGILSVIFFFLIISVLAFPNGPFTRPHPAIWRMVFGLSVLYFLFLVFVLFLNFEQVKAVMYWLDPNLRYATREADIMEYAVNCHVITWERILSHFDIFAFGHFWGWAMKALLIRSYGLCWTISITWELTELFFMHLLPNFAECWWDQVILDILLCNGGGIWLGMVVCRFLEMRTYHWASFKDIHTTTGKIKRAVLQFTPASWTYVRWFDPKSSFQRVAGIYLFMIIWQLTELNTFFLKHIFVFQASHPLSWGRILFIGIITAPTVRQYYAYLTDTQCKRVGTQCWVFGVIAFLEAIVCIKFGQDLFSKTQILYVVFWLLCVAFTTFLCLYGMVWYAEYYGHREKTLSESEDSPYSPDASWLHSKFSKGADNSPPKHPVNSESHSSRRRNRHSRSKVTNGIGKK</sequence>
<comment type="function">
    <text evidence="1">Catalyzes a base-exchange reaction in which the polar head group of phosphatidylethanolamine (PE) or phosphatidylcholine (PC) is replaced by L-serine (By similarity). Catalyzes mainly the conversion of phosphatidylcholine but also converts, in vitro and to a lesser extent, phosphatidylethanolamine (By similarity).</text>
</comment>
<comment type="catalytic activity">
    <reaction evidence="1">
        <text>a 1,2-diacyl-sn-glycero-3-phosphoethanolamine + L-serine = a 1,2-diacyl-sn-glycero-3-phospho-L-serine + ethanolamine</text>
        <dbReference type="Rhea" id="RHEA:27606"/>
        <dbReference type="ChEBI" id="CHEBI:33384"/>
        <dbReference type="ChEBI" id="CHEBI:57262"/>
        <dbReference type="ChEBI" id="CHEBI:57603"/>
        <dbReference type="ChEBI" id="CHEBI:64612"/>
        <dbReference type="EC" id="2.7.8.29"/>
    </reaction>
    <physiologicalReaction direction="left-to-right" evidence="1">
        <dbReference type="Rhea" id="RHEA:27607"/>
    </physiologicalReaction>
</comment>
<comment type="catalytic activity">
    <reaction evidence="1">
        <text>a 1,2-diacyl-sn-glycero-3-phosphocholine + L-serine = a 1,2-diacyl-sn-glycero-3-phospho-L-serine + choline</text>
        <dbReference type="Rhea" id="RHEA:45088"/>
        <dbReference type="ChEBI" id="CHEBI:15354"/>
        <dbReference type="ChEBI" id="CHEBI:33384"/>
        <dbReference type="ChEBI" id="CHEBI:57262"/>
        <dbReference type="ChEBI" id="CHEBI:57643"/>
    </reaction>
    <physiologicalReaction direction="left-to-right" evidence="1">
        <dbReference type="Rhea" id="RHEA:45089"/>
    </physiologicalReaction>
</comment>
<comment type="pathway">
    <text>Phospholipid metabolism; phosphatidylserine biosynthesis.</text>
</comment>
<comment type="subcellular location">
    <subcellularLocation>
        <location evidence="2">Endoplasmic reticulum membrane</location>
        <topology evidence="2">Multi-pass membrane protein</topology>
    </subcellularLocation>
    <text evidence="2">Highly enriched in the mitochondria-associated membrane (MAM).</text>
</comment>
<comment type="similarity">
    <text evidence="5">Belongs to the phosphatidyl serine synthase family.</text>
</comment>
<name>PTSS1_CHICK</name>
<reference key="1">
    <citation type="journal article" date="2005" name="Genome Biol.">
        <title>Full-length cDNAs from chicken bursal lymphocytes to facilitate gene function analysis.</title>
        <authorList>
            <person name="Caldwell R.B."/>
            <person name="Kierzek A.M."/>
            <person name="Arakawa H."/>
            <person name="Bezzubov Y."/>
            <person name="Zaim J."/>
            <person name="Fiedler P."/>
            <person name="Kutter S."/>
            <person name="Blagodatski A."/>
            <person name="Kostovska D."/>
            <person name="Koter M."/>
            <person name="Plachy J."/>
            <person name="Carninci P."/>
            <person name="Hayashizaki Y."/>
            <person name="Buerstedde J.-M."/>
        </authorList>
    </citation>
    <scope>NUCLEOTIDE SEQUENCE [LARGE SCALE MRNA]</scope>
    <source>
        <strain>CB</strain>
        <tissue>Bursa of Fabricius</tissue>
    </source>
</reference>
<reference key="2">
    <citation type="journal article" date="2004" name="Nature">
        <title>Sequence and comparative analysis of the chicken genome provide unique perspectives on vertebrate evolution.</title>
        <authorList>
            <person name="Hillier L.W."/>
            <person name="Miller W."/>
            <person name="Birney E."/>
            <person name="Warren W."/>
            <person name="Hardison R.C."/>
            <person name="Ponting C.P."/>
            <person name="Bork P."/>
            <person name="Burt D.W."/>
            <person name="Groenen M.A.M."/>
            <person name="Delany M.E."/>
            <person name="Dodgson J.B."/>
            <person name="Chinwalla A.T."/>
            <person name="Cliften P.F."/>
            <person name="Clifton S.W."/>
            <person name="Delehaunty K.D."/>
            <person name="Fronick C."/>
            <person name="Fulton R.S."/>
            <person name="Graves T.A."/>
            <person name="Kremitzki C."/>
            <person name="Layman D."/>
            <person name="Magrini V."/>
            <person name="McPherson J.D."/>
            <person name="Miner T.L."/>
            <person name="Minx P."/>
            <person name="Nash W.E."/>
            <person name="Nhan M.N."/>
            <person name="Nelson J.O."/>
            <person name="Oddy L.G."/>
            <person name="Pohl C.S."/>
            <person name="Randall-Maher J."/>
            <person name="Smith S.M."/>
            <person name="Wallis J.W."/>
            <person name="Yang S.-P."/>
            <person name="Romanov M.N."/>
            <person name="Rondelli C.M."/>
            <person name="Paton B."/>
            <person name="Smith J."/>
            <person name="Morrice D."/>
            <person name="Daniels L."/>
            <person name="Tempest H.G."/>
            <person name="Robertson L."/>
            <person name="Masabanda J.S."/>
            <person name="Griffin D.K."/>
            <person name="Vignal A."/>
            <person name="Fillon V."/>
            <person name="Jacobbson L."/>
            <person name="Kerje S."/>
            <person name="Andersson L."/>
            <person name="Crooijmans R.P."/>
            <person name="Aerts J."/>
            <person name="van der Poel J.J."/>
            <person name="Ellegren H."/>
            <person name="Caldwell R.B."/>
            <person name="Hubbard S.J."/>
            <person name="Grafham D.V."/>
            <person name="Kierzek A.M."/>
            <person name="McLaren S.R."/>
            <person name="Overton I.M."/>
            <person name="Arakawa H."/>
            <person name="Beattie K.J."/>
            <person name="Bezzubov Y."/>
            <person name="Boardman P.E."/>
            <person name="Bonfield J.K."/>
            <person name="Croning M.D.R."/>
            <person name="Davies R.M."/>
            <person name="Francis M.D."/>
            <person name="Humphray S.J."/>
            <person name="Scott C.E."/>
            <person name="Taylor R.G."/>
            <person name="Tickle C."/>
            <person name="Brown W.R.A."/>
            <person name="Rogers J."/>
            <person name="Buerstedde J.-M."/>
            <person name="Wilson S.A."/>
            <person name="Stubbs L."/>
            <person name="Ovcharenko I."/>
            <person name="Gordon L."/>
            <person name="Lucas S."/>
            <person name="Miller M.M."/>
            <person name="Inoko H."/>
            <person name="Shiina T."/>
            <person name="Kaufman J."/>
            <person name="Salomonsen J."/>
            <person name="Skjoedt K."/>
            <person name="Wong G.K.-S."/>
            <person name="Wang J."/>
            <person name="Liu B."/>
            <person name="Wang J."/>
            <person name="Yu J."/>
            <person name="Yang H."/>
            <person name="Nefedov M."/>
            <person name="Koriabine M."/>
            <person name="Dejong P.J."/>
            <person name="Goodstadt L."/>
            <person name="Webber C."/>
            <person name="Dickens N.J."/>
            <person name="Letunic I."/>
            <person name="Suyama M."/>
            <person name="Torrents D."/>
            <person name="von Mering C."/>
            <person name="Zdobnov E.M."/>
            <person name="Makova K."/>
            <person name="Nekrutenko A."/>
            <person name="Elnitski L."/>
            <person name="Eswara P."/>
            <person name="King D.C."/>
            <person name="Yang S.-P."/>
            <person name="Tyekucheva S."/>
            <person name="Radakrishnan A."/>
            <person name="Harris R.S."/>
            <person name="Chiaromonte F."/>
            <person name="Taylor J."/>
            <person name="He J."/>
            <person name="Rijnkels M."/>
            <person name="Griffiths-Jones S."/>
            <person name="Ureta-Vidal A."/>
            <person name="Hoffman M.M."/>
            <person name="Severin J."/>
            <person name="Searle S.M.J."/>
            <person name="Law A.S."/>
            <person name="Speed D."/>
            <person name="Waddington D."/>
            <person name="Cheng Z."/>
            <person name="Tuzun E."/>
            <person name="Eichler E."/>
            <person name="Bao Z."/>
            <person name="Flicek P."/>
            <person name="Shteynberg D.D."/>
            <person name="Brent M.R."/>
            <person name="Bye J.M."/>
            <person name="Huckle E.J."/>
            <person name="Chatterji S."/>
            <person name="Dewey C."/>
            <person name="Pachter L."/>
            <person name="Kouranov A."/>
            <person name="Mourelatos Z."/>
            <person name="Hatzigeorgiou A.G."/>
            <person name="Paterson A.H."/>
            <person name="Ivarie R."/>
            <person name="Brandstrom M."/>
            <person name="Axelsson E."/>
            <person name="Backstrom N."/>
            <person name="Berlin S."/>
            <person name="Webster M.T."/>
            <person name="Pourquie O."/>
            <person name="Reymond A."/>
            <person name="Ucla C."/>
            <person name="Antonarakis S.E."/>
            <person name="Long M."/>
            <person name="Emerson J.J."/>
            <person name="Betran E."/>
            <person name="Dupanloup I."/>
            <person name="Kaessmann H."/>
            <person name="Hinrichs A.S."/>
            <person name="Bejerano G."/>
            <person name="Furey T.S."/>
            <person name="Harte R.A."/>
            <person name="Raney B."/>
            <person name="Siepel A."/>
            <person name="Kent W.J."/>
            <person name="Haussler D."/>
            <person name="Eyras E."/>
            <person name="Castelo R."/>
            <person name="Abril J.F."/>
            <person name="Castellano S."/>
            <person name="Camara F."/>
            <person name="Parra G."/>
            <person name="Guigo R."/>
            <person name="Bourque G."/>
            <person name="Tesler G."/>
            <person name="Pevzner P.A."/>
            <person name="Smit A."/>
            <person name="Fulton L.A."/>
            <person name="Mardis E.R."/>
            <person name="Wilson R.K."/>
        </authorList>
    </citation>
    <scope>NUCLEOTIDE SEQUENCE [LARGE SCALE GENOMIC DNA]</scope>
    <source>
        <strain>Red jungle fowl</strain>
    </source>
</reference>
<dbReference type="EC" id="2.7.8.29" evidence="1"/>
<dbReference type="EMBL" id="AJ719519">
    <property type="protein sequence ID" value="CAG31178.1"/>
    <property type="molecule type" value="mRNA"/>
</dbReference>
<dbReference type="EMBL" id="AADN02024909">
    <property type="status" value="NOT_ANNOTATED_CDS"/>
    <property type="molecule type" value="Genomic_DNA"/>
</dbReference>
<dbReference type="RefSeq" id="NP_001026676.2">
    <property type="nucleotide sequence ID" value="NM_001031505.2"/>
</dbReference>
<dbReference type="SMR" id="Q5ZM65"/>
<dbReference type="FunCoup" id="Q5ZM65">
    <property type="interactions" value="712"/>
</dbReference>
<dbReference type="STRING" id="9031.ENSGALP00000045213"/>
<dbReference type="PaxDb" id="9031-ENSGALP00000025730"/>
<dbReference type="GeneID" id="428374"/>
<dbReference type="KEGG" id="gga:428374"/>
<dbReference type="CTD" id="9791"/>
<dbReference type="VEuPathDB" id="HostDB:geneid_428374"/>
<dbReference type="eggNOG" id="KOG2735">
    <property type="taxonomic scope" value="Eukaryota"/>
</dbReference>
<dbReference type="HOGENOM" id="CLU_037661_3_0_1"/>
<dbReference type="InParanoid" id="Q5ZM65"/>
<dbReference type="OMA" id="LPNFWEC"/>
<dbReference type="OrthoDB" id="10265393at2759"/>
<dbReference type="PhylomeDB" id="Q5ZM65"/>
<dbReference type="TreeFam" id="TF300012"/>
<dbReference type="Reactome" id="R-GGA-1483101">
    <property type="pathway name" value="Synthesis of PS"/>
</dbReference>
<dbReference type="UniPathway" id="UPA00948"/>
<dbReference type="PRO" id="PR:Q5ZM65"/>
<dbReference type="Proteomes" id="UP000000539">
    <property type="component" value="Chromosome 2"/>
</dbReference>
<dbReference type="Bgee" id="ENSGALG00000030185">
    <property type="expression patterns" value="Expressed in liver and 13 other cell types or tissues"/>
</dbReference>
<dbReference type="GO" id="GO:0005789">
    <property type="term" value="C:endoplasmic reticulum membrane"/>
    <property type="evidence" value="ECO:0007669"/>
    <property type="project" value="UniProtKB-SubCell"/>
</dbReference>
<dbReference type="GO" id="GO:0106258">
    <property type="term" value="F:L-serine-phosphatidylcholine phosphatidyltransferase activity"/>
    <property type="evidence" value="ECO:0007669"/>
    <property type="project" value="RHEA"/>
</dbReference>
<dbReference type="GO" id="GO:0106245">
    <property type="term" value="F:L-serine-phosphatidylethanolamine phosphatidyltransferase activity"/>
    <property type="evidence" value="ECO:0007669"/>
    <property type="project" value="UniProtKB-EC"/>
</dbReference>
<dbReference type="GO" id="GO:0006659">
    <property type="term" value="P:phosphatidylserine biosynthetic process"/>
    <property type="evidence" value="ECO:0007669"/>
    <property type="project" value="UniProtKB-UniPathway"/>
</dbReference>
<dbReference type="InterPro" id="IPR038765">
    <property type="entry name" value="Papain-like_cys_pep_sf"/>
</dbReference>
<dbReference type="InterPro" id="IPR004277">
    <property type="entry name" value="PSS"/>
</dbReference>
<dbReference type="PANTHER" id="PTHR15362">
    <property type="entry name" value="PHOSPHATIDYLINOSITOL SYNTHASE"/>
    <property type="match status" value="1"/>
</dbReference>
<dbReference type="PANTHER" id="PTHR15362:SF15">
    <property type="entry name" value="PHOSPHATIDYLSERINE SYNTHASE 1"/>
    <property type="match status" value="1"/>
</dbReference>
<dbReference type="Pfam" id="PF03034">
    <property type="entry name" value="PSS"/>
    <property type="match status" value="1"/>
</dbReference>
<dbReference type="SUPFAM" id="SSF54001">
    <property type="entry name" value="Cysteine proteinases"/>
    <property type="match status" value="1"/>
</dbReference>
<feature type="chain" id="PRO_0000416031" description="Phosphatidylserine synthase 1">
    <location>
        <begin position="1"/>
        <end position="473"/>
    </location>
</feature>
<feature type="topological domain" description="Cytoplasmic" evidence="3">
    <location>
        <begin position="1"/>
        <end position="35"/>
    </location>
</feature>
<feature type="transmembrane region" description="Helical" evidence="3">
    <location>
        <begin position="36"/>
        <end position="56"/>
    </location>
</feature>
<feature type="topological domain" description="Lumenal" evidence="3">
    <location>
        <begin position="57"/>
        <end position="72"/>
    </location>
</feature>
<feature type="transmembrane region" description="Helical" evidence="3">
    <location>
        <begin position="73"/>
        <end position="93"/>
    </location>
</feature>
<feature type="topological domain" description="Cytoplasmic" evidence="3">
    <location>
        <begin position="94"/>
        <end position="102"/>
    </location>
</feature>
<feature type="transmembrane region" description="Helical" evidence="3">
    <location>
        <begin position="103"/>
        <end position="123"/>
    </location>
</feature>
<feature type="topological domain" description="Lumenal" evidence="3">
    <location>
        <begin position="124"/>
        <end position="186"/>
    </location>
</feature>
<feature type="transmembrane region" description="Helical" evidence="3">
    <location>
        <begin position="187"/>
        <end position="207"/>
    </location>
</feature>
<feature type="topological domain" description="Cytoplasmic" evidence="3">
    <location>
        <begin position="208"/>
        <end position="216"/>
    </location>
</feature>
<feature type="transmembrane region" description="Helical" evidence="3">
    <location>
        <begin position="217"/>
        <end position="237"/>
    </location>
</feature>
<feature type="topological domain" description="Lumenal" evidence="3">
    <location>
        <begin position="238"/>
        <end position="286"/>
    </location>
</feature>
<feature type="transmembrane region" description="Helical" evidence="3">
    <location>
        <begin position="287"/>
        <end position="307"/>
    </location>
</feature>
<feature type="topological domain" description="Cytoplasmic" evidence="3">
    <location>
        <begin position="308"/>
        <end position="319"/>
    </location>
</feature>
<feature type="transmembrane region" description="Helical" evidence="3">
    <location>
        <begin position="320"/>
        <end position="342"/>
    </location>
</feature>
<feature type="topological domain" description="Lumenal" evidence="3">
    <location>
        <begin position="343"/>
        <end position="355"/>
    </location>
</feature>
<feature type="transmembrane region" description="Helical" evidence="3">
    <location>
        <begin position="356"/>
        <end position="376"/>
    </location>
</feature>
<feature type="topological domain" description="Cytoplasmic" evidence="3">
    <location>
        <begin position="377"/>
        <end position="380"/>
    </location>
</feature>
<feature type="transmembrane region" description="Helical" evidence="3">
    <location>
        <begin position="381"/>
        <end position="401"/>
    </location>
</feature>
<feature type="topological domain" description="Lumenal" evidence="3">
    <location>
        <begin position="402"/>
        <end position="473"/>
    </location>
</feature>
<feature type="region of interest" description="Disordered" evidence="4">
    <location>
        <begin position="420"/>
        <end position="473"/>
    </location>
</feature>
<feature type="compositionally biased region" description="Basic residues" evidence="4">
    <location>
        <begin position="455"/>
        <end position="464"/>
    </location>
</feature>
<feature type="sequence conflict" description="In Ref. 1; CAG31178." evidence="5" ref="1">
    <original>R</original>
    <variation>H</variation>
    <location>
        <position position="184"/>
    </location>
</feature>
<proteinExistence type="evidence at transcript level"/>
<evidence type="ECO:0000250" key="1">
    <source>
        <dbReference type="UniProtKB" id="P48651"/>
    </source>
</evidence>
<evidence type="ECO:0000250" key="2">
    <source>
        <dbReference type="UniProtKB" id="Q99LH2"/>
    </source>
</evidence>
<evidence type="ECO:0000255" key="3"/>
<evidence type="ECO:0000256" key="4">
    <source>
        <dbReference type="SAM" id="MobiDB-lite"/>
    </source>
</evidence>
<evidence type="ECO:0000305" key="5"/>
<gene>
    <name type="primary">PTDSS1</name>
    <name type="ORF">RCJMB04_2p18</name>
</gene>
<organism>
    <name type="scientific">Gallus gallus</name>
    <name type="common">Chicken</name>
    <dbReference type="NCBI Taxonomy" id="9031"/>
    <lineage>
        <taxon>Eukaryota</taxon>
        <taxon>Metazoa</taxon>
        <taxon>Chordata</taxon>
        <taxon>Craniata</taxon>
        <taxon>Vertebrata</taxon>
        <taxon>Euteleostomi</taxon>
        <taxon>Archelosauria</taxon>
        <taxon>Archosauria</taxon>
        <taxon>Dinosauria</taxon>
        <taxon>Saurischia</taxon>
        <taxon>Theropoda</taxon>
        <taxon>Coelurosauria</taxon>
        <taxon>Aves</taxon>
        <taxon>Neognathae</taxon>
        <taxon>Galloanserae</taxon>
        <taxon>Galliformes</taxon>
        <taxon>Phasianidae</taxon>
        <taxon>Phasianinae</taxon>
        <taxon>Gallus</taxon>
    </lineage>
</organism>
<accession>Q5ZM65</accession>
<accession>F1P3L7</accession>
<protein>
    <recommendedName>
        <fullName>Phosphatidylserine synthase 1</fullName>
        <shortName>PSS-1</shortName>
        <shortName>PtdSer synthase 1</shortName>
        <ecNumber evidence="1">2.7.8.29</ecNumber>
    </recommendedName>
    <alternativeName>
        <fullName>Serine-exchange enzyme I</fullName>
    </alternativeName>
</protein>
<keyword id="KW-0256">Endoplasmic reticulum</keyword>
<keyword id="KW-0444">Lipid biosynthesis</keyword>
<keyword id="KW-0443">Lipid metabolism</keyword>
<keyword id="KW-0472">Membrane</keyword>
<keyword id="KW-0594">Phospholipid biosynthesis</keyword>
<keyword id="KW-1208">Phospholipid metabolism</keyword>
<keyword id="KW-1185">Reference proteome</keyword>
<keyword id="KW-0808">Transferase</keyword>
<keyword id="KW-0812">Transmembrane</keyword>
<keyword id="KW-1133">Transmembrane helix</keyword>